<organism>
    <name type="scientific">Arthrospira platensis (strain NIES-39 / UTEX 3086 / IAM M-135)</name>
    <name type="common">Spirulina platensis</name>
    <dbReference type="NCBI Taxonomy" id="696747"/>
    <lineage>
        <taxon>Bacteria</taxon>
        <taxon>Bacillati</taxon>
        <taxon>Cyanobacteriota</taxon>
        <taxon>Cyanophyceae</taxon>
        <taxon>Oscillatoriophycideae</taxon>
        <taxon>Oscillatoriales</taxon>
        <taxon>Microcoleaceae</taxon>
        <taxon>Arthrospira</taxon>
    </lineage>
</organism>
<sequence>MTQAQTWSQRFEKALHPAIATFNASIGFDIELIEYDLTGSVAHAKMLVKTGIISPEEGEALVNGLETIREEYRQGQFNPGVDAEDIHFAVERRLTEIAGDVGKKLHTGRSRNDQVGTDTRLYLKDQIQQIRTQILEFQGVLLDLATNHVHTLIPGYTHLQRAQPLSLAHHLLAYVEMAHRDWERLGEVYQRVNTSPLGCGALAGTTFPIDRHYSAELLGFDRVYANSLDGVSDRDWAIEFLSASSLILVHLSRLSEEIIFWASQEFGFITLTDSCSTGSSIMPQKKNPDVPELVRGKTGRVFGHLQGLLVLMKGLPLAYNKDLQEDKEALFDAVKTVKGCLEAMTILLSQGMEFRPQRLAEAVAEDFSNATDVADYLATKGVPFREAYNLVGKVVRTCLESGKLLKDLTLDEWKSLHPEFDVDIYDAIAPLQVVAARNSYGGTGFEQVKSALQNARDRWEAAQS</sequence>
<proteinExistence type="evidence at protein level"/>
<dbReference type="EC" id="4.3.2.1" evidence="1 2"/>
<dbReference type="EMBL" id="AP011615">
    <property type="protein sequence ID" value="BAI88949.1"/>
    <property type="molecule type" value="Genomic_DNA"/>
</dbReference>
<dbReference type="SMR" id="P0DXD4"/>
<dbReference type="KEGG" id="arp:NIES39_C00790"/>
<dbReference type="UniPathway" id="UPA00068">
    <property type="reaction ID" value="UER00114"/>
</dbReference>
<dbReference type="GO" id="GO:0005829">
    <property type="term" value="C:cytosol"/>
    <property type="evidence" value="ECO:0007669"/>
    <property type="project" value="TreeGrafter"/>
</dbReference>
<dbReference type="GO" id="GO:0004056">
    <property type="term" value="F:argininosuccinate lyase activity"/>
    <property type="evidence" value="ECO:0007669"/>
    <property type="project" value="UniProtKB-UniRule"/>
</dbReference>
<dbReference type="GO" id="GO:0042450">
    <property type="term" value="P:arginine biosynthetic process via ornithine"/>
    <property type="evidence" value="ECO:0007669"/>
    <property type="project" value="InterPro"/>
</dbReference>
<dbReference type="GO" id="GO:0006526">
    <property type="term" value="P:L-arginine biosynthetic process"/>
    <property type="evidence" value="ECO:0007669"/>
    <property type="project" value="UniProtKB-UniRule"/>
</dbReference>
<dbReference type="CDD" id="cd01359">
    <property type="entry name" value="Argininosuccinate_lyase"/>
    <property type="match status" value="1"/>
</dbReference>
<dbReference type="FunFam" id="1.10.275.10:FF:000002">
    <property type="entry name" value="Argininosuccinate lyase"/>
    <property type="match status" value="1"/>
</dbReference>
<dbReference type="FunFam" id="1.10.40.30:FF:000001">
    <property type="entry name" value="Argininosuccinate lyase"/>
    <property type="match status" value="1"/>
</dbReference>
<dbReference type="FunFam" id="1.20.200.10:FF:000015">
    <property type="entry name" value="argininosuccinate lyase isoform X2"/>
    <property type="match status" value="1"/>
</dbReference>
<dbReference type="Gene3D" id="1.10.40.30">
    <property type="entry name" value="Fumarase/aspartase (C-terminal domain)"/>
    <property type="match status" value="1"/>
</dbReference>
<dbReference type="Gene3D" id="1.20.200.10">
    <property type="entry name" value="Fumarase/aspartase (Central domain)"/>
    <property type="match status" value="1"/>
</dbReference>
<dbReference type="Gene3D" id="1.10.275.10">
    <property type="entry name" value="Fumarase/aspartase (N-terminal domain)"/>
    <property type="match status" value="1"/>
</dbReference>
<dbReference type="HAMAP" id="MF_00006">
    <property type="entry name" value="Arg_succ_lyase"/>
    <property type="match status" value="1"/>
</dbReference>
<dbReference type="InterPro" id="IPR029419">
    <property type="entry name" value="Arg_succ_lyase_C"/>
</dbReference>
<dbReference type="InterPro" id="IPR009049">
    <property type="entry name" value="Argininosuccinate_lyase"/>
</dbReference>
<dbReference type="InterPro" id="IPR024083">
    <property type="entry name" value="Fumarase/histidase_N"/>
</dbReference>
<dbReference type="InterPro" id="IPR020557">
    <property type="entry name" value="Fumarate_lyase_CS"/>
</dbReference>
<dbReference type="InterPro" id="IPR000362">
    <property type="entry name" value="Fumarate_lyase_fam"/>
</dbReference>
<dbReference type="InterPro" id="IPR022761">
    <property type="entry name" value="Fumarate_lyase_N"/>
</dbReference>
<dbReference type="InterPro" id="IPR008948">
    <property type="entry name" value="L-Aspartase-like"/>
</dbReference>
<dbReference type="NCBIfam" id="TIGR00838">
    <property type="entry name" value="argH"/>
    <property type="match status" value="1"/>
</dbReference>
<dbReference type="PANTHER" id="PTHR43814">
    <property type="entry name" value="ARGININOSUCCINATE LYASE"/>
    <property type="match status" value="1"/>
</dbReference>
<dbReference type="PANTHER" id="PTHR43814:SF1">
    <property type="entry name" value="ARGININOSUCCINATE LYASE"/>
    <property type="match status" value="1"/>
</dbReference>
<dbReference type="Pfam" id="PF14698">
    <property type="entry name" value="ASL_C2"/>
    <property type="match status" value="1"/>
</dbReference>
<dbReference type="Pfam" id="PF00206">
    <property type="entry name" value="Lyase_1"/>
    <property type="match status" value="1"/>
</dbReference>
<dbReference type="PRINTS" id="PR00145">
    <property type="entry name" value="ARGSUCLYASE"/>
</dbReference>
<dbReference type="PRINTS" id="PR00149">
    <property type="entry name" value="FUMRATELYASE"/>
</dbReference>
<dbReference type="SUPFAM" id="SSF48557">
    <property type="entry name" value="L-aspartase-like"/>
    <property type="match status" value="1"/>
</dbReference>
<dbReference type="PROSITE" id="PS00163">
    <property type="entry name" value="FUMARATE_LYASES"/>
    <property type="match status" value="1"/>
</dbReference>
<name>ARLY_ARTPN</name>
<comment type="function">
    <text evidence="2">Catalyzes the last step of arginine biosynthesis, the conversion of argininosuccinate into L-arginine and fumarate.</text>
</comment>
<comment type="catalytic activity">
    <reaction evidence="1 2">
        <text>2-(N(omega)-L-arginino)succinate = fumarate + L-arginine</text>
        <dbReference type="Rhea" id="RHEA:24020"/>
        <dbReference type="ChEBI" id="CHEBI:29806"/>
        <dbReference type="ChEBI" id="CHEBI:32682"/>
        <dbReference type="ChEBI" id="CHEBI:57472"/>
        <dbReference type="EC" id="4.3.2.1"/>
    </reaction>
    <physiologicalReaction direction="left-to-right" evidence="2">
        <dbReference type="Rhea" id="RHEA:24021"/>
    </physiologicalReaction>
</comment>
<comment type="activity regulation">
    <text evidence="2">Strongly inhibited by L-arginine (PubMed:35583703). Inhibitory effects are lowered at pH 7.0 compared to those at pH 8.0 (PubMed:35583703). At 37 degrees Celsius and pH 7.5, activity decreases to 73% and 31% in the presence of 1 mM and 10 mM arginine, respectively (PubMed:35583703). Activity also decreases to 84%, 93%, 82% and 85% in the presence of 10 mM sodium citrate, citrulline, asparatate and glutamate, respectively (PubMed:35583703). Activity decreases to 96% in presence of 1 mM L-lysine (PubMed:35583703).</text>
</comment>
<comment type="biophysicochemical properties">
    <kinetics>
        <KM evidence="2">0.069 mM for argininosuccinate (at 42 degrees Celsius and pH 8.0)</KM>
        <text evidence="2">kcat is 2.20 sec(-1) with argininosuccinate as substrate.</text>
    </kinetics>
    <phDependence>
        <text evidence="2">Optimum pH is 8.0 (PubMed:35583703). Shows more than 40% enzymatic activity in terms of relative activity at pH 7.0-9.5 (PubMed:35583703).</text>
    </phDependence>
    <temperatureDependence>
        <text evidence="2">Optimum temperature is 42 degrees Celsius (PubMed:35583703). Shows more than 40% enzymatic activity in terms of relative activity at 20-50 degrees Celsius (PubMed:35583703). Inactive above 55 degrees Celsius (PubMed:35583703).</text>
    </temperatureDependence>
</comment>
<comment type="pathway">
    <text evidence="1">Amino-acid biosynthesis; L-arginine biosynthesis; L-arginine from L-ornithine and carbamoyl phosphate: step 3/3.</text>
</comment>
<comment type="subcellular location">
    <subcellularLocation>
        <location evidence="1">Cytoplasm</location>
    </subcellularLocation>
</comment>
<comment type="similarity">
    <text evidence="1">Belongs to the lyase 1 family. Argininosuccinate lyase subfamily.</text>
</comment>
<gene>
    <name evidence="1 3" type="primary">argH</name>
    <name evidence="4" type="ORF">NIES39_C00790</name>
</gene>
<feature type="chain" id="PRO_0000460553" description="Argininosuccinate lyase">
    <location>
        <begin position="1"/>
        <end position="464"/>
    </location>
</feature>
<accession>P0DXD4</accession>
<keyword id="KW-0028">Amino-acid biosynthesis</keyword>
<keyword id="KW-0055">Arginine biosynthesis</keyword>
<keyword id="KW-0963">Cytoplasm</keyword>
<keyword id="KW-0456">Lyase</keyword>
<protein>
    <recommendedName>
        <fullName evidence="1 3">Argininosuccinate lyase</fullName>
        <shortName evidence="1">ASAL</shortName>
        <ecNumber evidence="1 2">4.3.2.1</ecNumber>
    </recommendedName>
    <alternativeName>
        <fullName evidence="3">ArArgH</fullName>
    </alternativeName>
    <alternativeName>
        <fullName evidence="1">Arginosuccinase</fullName>
    </alternativeName>
</protein>
<reference key="1">
    <citation type="journal article" date="2010" name="DNA Res.">
        <title>Genomic structure of an economically important cyanobacterium, Arthrospira (Spirulina) platensis NIES-39.</title>
        <authorList>
            <person name="Fujisawa T."/>
            <person name="Narikawa R."/>
            <person name="Okamoto S."/>
            <person name="Ehira S."/>
            <person name="Yoshimura H."/>
            <person name="Suzuki I."/>
            <person name="Masuda T."/>
            <person name="Mochimaru M."/>
            <person name="Takaichi S."/>
            <person name="Awai K."/>
            <person name="Sekine M."/>
            <person name="Horikawa H."/>
            <person name="Yashiro I."/>
            <person name="Omata S."/>
            <person name="Takarada H."/>
            <person name="Katano Y."/>
            <person name="Kosugi H."/>
            <person name="Tanikawa S."/>
            <person name="Ohmori K."/>
            <person name="Sato N."/>
            <person name="Ikeuchi M."/>
            <person name="Fujita N."/>
            <person name="Ohmori M."/>
        </authorList>
    </citation>
    <scope>NUCLEOTIDE SEQUENCE [LARGE SCALE GENOMIC DNA]</scope>
    <source>
        <strain>NIES-39 / UTEX 3086 / IAM M-135</strain>
    </source>
</reference>
<reference key="2">
    <citation type="journal article" date="2022" name="Plant Mol. Biol.">
        <title>Arginine inhibition of the argininosuccinate lyases is conserved among three orders in cyanobacteria.</title>
        <authorList>
            <person name="Katayama N."/>
            <person name="Osanai T."/>
        </authorList>
    </citation>
    <scope>FUNCTION</scope>
    <scope>CATALYTIC ACTIVITY</scope>
    <scope>ACTIVITY REGULATION</scope>
    <scope>BIOPHYSICOCHEMICAL PROPERTIES</scope>
    <source>
        <strain>NIES-39 / UTEX 3086 / IAM M-135</strain>
    </source>
</reference>
<evidence type="ECO:0000255" key="1">
    <source>
        <dbReference type="HAMAP-Rule" id="MF_00006"/>
    </source>
</evidence>
<evidence type="ECO:0000269" key="2">
    <source>
    </source>
</evidence>
<evidence type="ECO:0000303" key="3">
    <source>
    </source>
</evidence>
<evidence type="ECO:0000312" key="4">
    <source>
        <dbReference type="EMBL" id="BAI88949.1"/>
    </source>
</evidence>